<organism>
    <name type="scientific">Thermococcus kodakarensis (strain ATCC BAA-918 / JCM 12380 / KOD1)</name>
    <name type="common">Pyrococcus kodakaraensis (strain KOD1)</name>
    <dbReference type="NCBI Taxonomy" id="69014"/>
    <lineage>
        <taxon>Archaea</taxon>
        <taxon>Methanobacteriati</taxon>
        <taxon>Methanobacteriota</taxon>
        <taxon>Thermococci</taxon>
        <taxon>Thermococcales</taxon>
        <taxon>Thermococcaceae</taxon>
        <taxon>Thermococcus</taxon>
    </lineage>
</organism>
<keyword id="KW-0028">Amino-acid biosynthesis</keyword>
<keyword id="KW-0057">Aromatic amino acid biosynthesis</keyword>
<keyword id="KW-0456">Lyase</keyword>
<keyword id="KW-0663">Pyridoxal phosphate</keyword>
<keyword id="KW-1185">Reference proteome</keyword>
<keyword id="KW-0822">Tryptophan biosynthesis</keyword>
<sequence>MKAVLPDSKIPKRWYNILPDLPEPLAPPLDPETDEPMEPEKLLRIFAEELVKQEMSTDRYIEIPKEVREIYSKIGRPTPLFRATNLERALGTPARIYFKYEGATVTGSHKINTALAQAYYAKRQGIERLVTETGAGQWGTALSLAGALLGLNVRVYMARASYQQKPYRKTIMRLYGAEIYPSPSDRTEIGRKFLAEDPNHPGGLGIAISEAIEDVLRDEKARYALGSVLNHVLMHQTVIGLEAQEQMKEFEEPDVIIGCVGGGSNFAGLAYPFVRDVLKGEAEYEFIAVEPKAAPSMTRGVYKYDYGDSGGYTPKMKMHTLGHTYYVPPIHAGGLRYHGLAPTLSVLINHGIVKPVAYHQNEVFQAAHLFAKTEGIVPAPESAHAIKGAIDRALEAKREGREEVILFNLSGHGFLDLKGYEDYLDGKLEDYEPEHFPALDNY</sequence>
<protein>
    <recommendedName>
        <fullName evidence="1">Tryptophan synthase beta chain 2</fullName>
        <ecNumber evidence="1">4.2.1.20</ecNumber>
    </recommendedName>
</protein>
<name>TRPB2_THEKO</name>
<reference key="1">
    <citation type="journal article" date="2005" name="Genome Res.">
        <title>Complete genome sequence of the hyperthermophilic archaeon Thermococcus kodakaraensis KOD1 and comparison with Pyrococcus genomes.</title>
        <authorList>
            <person name="Fukui T."/>
            <person name="Atomi H."/>
            <person name="Kanai T."/>
            <person name="Matsumi R."/>
            <person name="Fujiwara S."/>
            <person name="Imanaka T."/>
        </authorList>
    </citation>
    <scope>NUCLEOTIDE SEQUENCE [LARGE SCALE GENOMIC DNA]</scope>
    <source>
        <strain>ATCC BAA-918 / JCM 12380 / KOD1</strain>
    </source>
</reference>
<dbReference type="EC" id="4.2.1.20" evidence="1"/>
<dbReference type="EMBL" id="AP006878">
    <property type="protein sequence ID" value="BAD85631.1"/>
    <property type="molecule type" value="Genomic_DNA"/>
</dbReference>
<dbReference type="RefSeq" id="WP_011250393.1">
    <property type="nucleotide sequence ID" value="NC_006624.1"/>
</dbReference>
<dbReference type="SMR" id="Q5JDJ1"/>
<dbReference type="STRING" id="69014.TK1442"/>
<dbReference type="EnsemblBacteria" id="BAD85631">
    <property type="protein sequence ID" value="BAD85631"/>
    <property type="gene ID" value="TK1442"/>
</dbReference>
<dbReference type="GeneID" id="78447965"/>
<dbReference type="KEGG" id="tko:TK1442"/>
<dbReference type="PATRIC" id="fig|69014.16.peg.1404"/>
<dbReference type="eggNOG" id="arCOG01432">
    <property type="taxonomic scope" value="Archaea"/>
</dbReference>
<dbReference type="HOGENOM" id="CLU_042858_1_0_2"/>
<dbReference type="InParanoid" id="Q5JDJ1"/>
<dbReference type="OrthoDB" id="371827at2157"/>
<dbReference type="PhylomeDB" id="Q5JDJ1"/>
<dbReference type="BRENDA" id="4.2.1.122">
    <property type="organism ID" value="5246"/>
</dbReference>
<dbReference type="BRENDA" id="4.2.1.20">
    <property type="organism ID" value="5246"/>
</dbReference>
<dbReference type="UniPathway" id="UPA00035">
    <property type="reaction ID" value="UER00044"/>
</dbReference>
<dbReference type="Proteomes" id="UP000000536">
    <property type="component" value="Chromosome"/>
</dbReference>
<dbReference type="GO" id="GO:0052684">
    <property type="term" value="F:L-serine hydro-lyase (adding indole, L-tryptophan-forming) activity"/>
    <property type="evidence" value="ECO:0000318"/>
    <property type="project" value="GO_Central"/>
</dbReference>
<dbReference type="GO" id="GO:0030170">
    <property type="term" value="F:pyridoxal phosphate binding"/>
    <property type="evidence" value="ECO:0007669"/>
    <property type="project" value="InterPro"/>
</dbReference>
<dbReference type="GO" id="GO:0004834">
    <property type="term" value="F:tryptophan synthase activity"/>
    <property type="evidence" value="ECO:0007669"/>
    <property type="project" value="UniProtKB-UniRule"/>
</dbReference>
<dbReference type="GO" id="GO:0000162">
    <property type="term" value="P:L-tryptophan biosynthetic process"/>
    <property type="evidence" value="ECO:0000318"/>
    <property type="project" value="GO_Central"/>
</dbReference>
<dbReference type="CDD" id="cd06446">
    <property type="entry name" value="Trp-synth_B"/>
    <property type="match status" value="1"/>
</dbReference>
<dbReference type="Gene3D" id="3.40.50.1100">
    <property type="match status" value="2"/>
</dbReference>
<dbReference type="HAMAP" id="MF_00133">
    <property type="entry name" value="Trp_synth_beta"/>
    <property type="match status" value="1"/>
</dbReference>
<dbReference type="InterPro" id="IPR006316">
    <property type="entry name" value="Trp_synth_b-like"/>
</dbReference>
<dbReference type="InterPro" id="IPR006653">
    <property type="entry name" value="Trp_synth_b_CS"/>
</dbReference>
<dbReference type="InterPro" id="IPR006654">
    <property type="entry name" value="Trp_synth_beta"/>
</dbReference>
<dbReference type="InterPro" id="IPR023026">
    <property type="entry name" value="Trp_synth_beta/beta-like"/>
</dbReference>
<dbReference type="InterPro" id="IPR001926">
    <property type="entry name" value="TrpB-like_PALP"/>
</dbReference>
<dbReference type="InterPro" id="IPR036052">
    <property type="entry name" value="TrpB-like_PALP_sf"/>
</dbReference>
<dbReference type="NCBIfam" id="NF009057">
    <property type="entry name" value="PRK12391.1"/>
    <property type="match status" value="1"/>
</dbReference>
<dbReference type="NCBIfam" id="TIGR01415">
    <property type="entry name" value="trpB_rel"/>
    <property type="match status" value="1"/>
</dbReference>
<dbReference type="PANTHER" id="PTHR48077:SF6">
    <property type="entry name" value="TRYPTOPHAN SYNTHASE"/>
    <property type="match status" value="1"/>
</dbReference>
<dbReference type="PANTHER" id="PTHR48077">
    <property type="entry name" value="TRYPTOPHAN SYNTHASE-RELATED"/>
    <property type="match status" value="1"/>
</dbReference>
<dbReference type="Pfam" id="PF00291">
    <property type="entry name" value="PALP"/>
    <property type="match status" value="1"/>
</dbReference>
<dbReference type="PIRSF" id="PIRSF001413">
    <property type="entry name" value="Trp_syn_beta"/>
    <property type="match status" value="1"/>
</dbReference>
<dbReference type="PIRSF" id="PIRSF500824">
    <property type="entry name" value="TrpB_prok"/>
    <property type="match status" value="1"/>
</dbReference>
<dbReference type="SUPFAM" id="SSF53686">
    <property type="entry name" value="Tryptophan synthase beta subunit-like PLP-dependent enzymes"/>
    <property type="match status" value="1"/>
</dbReference>
<dbReference type="PROSITE" id="PS00168">
    <property type="entry name" value="TRP_SYNTHASE_BETA"/>
    <property type="match status" value="1"/>
</dbReference>
<proteinExistence type="inferred from homology"/>
<gene>
    <name evidence="1" type="primary">trpB2</name>
    <name type="ordered locus">TK1442</name>
</gene>
<comment type="function">
    <text evidence="1">The beta subunit is responsible for the synthesis of L-tryptophan from indole and L-serine.</text>
</comment>
<comment type="catalytic activity">
    <reaction evidence="1">
        <text>(1S,2R)-1-C-(indol-3-yl)glycerol 3-phosphate + L-serine = D-glyceraldehyde 3-phosphate + L-tryptophan + H2O</text>
        <dbReference type="Rhea" id="RHEA:10532"/>
        <dbReference type="ChEBI" id="CHEBI:15377"/>
        <dbReference type="ChEBI" id="CHEBI:33384"/>
        <dbReference type="ChEBI" id="CHEBI:57912"/>
        <dbReference type="ChEBI" id="CHEBI:58866"/>
        <dbReference type="ChEBI" id="CHEBI:59776"/>
        <dbReference type="EC" id="4.2.1.20"/>
    </reaction>
</comment>
<comment type="cofactor">
    <cofactor evidence="1">
        <name>pyridoxal 5'-phosphate</name>
        <dbReference type="ChEBI" id="CHEBI:597326"/>
    </cofactor>
</comment>
<comment type="pathway">
    <text evidence="1">Amino-acid biosynthesis; L-tryptophan biosynthesis; L-tryptophan from chorismate: step 5/5.</text>
</comment>
<comment type="subunit">
    <text evidence="1">Tetramer of two alpha and two beta chains.</text>
</comment>
<comment type="similarity">
    <text evidence="1">Belongs to the TrpB family.</text>
</comment>
<accession>Q5JDJ1</accession>
<evidence type="ECO:0000255" key="1">
    <source>
        <dbReference type="HAMAP-Rule" id="MF_00133"/>
    </source>
</evidence>
<feature type="chain" id="PRO_0000099054" description="Tryptophan synthase beta chain 2">
    <location>
        <begin position="1"/>
        <end position="442"/>
    </location>
</feature>
<feature type="modified residue" description="N6-(pyridoxal phosphate)lysine" evidence="1">
    <location>
        <position position="110"/>
    </location>
</feature>